<proteinExistence type="inferred from homology"/>
<comment type="function">
    <text evidence="1">NAD-binding protein involved in the addition of a carboxymethylaminomethyl (cmnm) group at the wobble position (U34) of certain tRNAs, forming tRNA-cmnm(5)s(2)U34.</text>
</comment>
<comment type="cofactor">
    <cofactor evidence="1">
        <name>FAD</name>
        <dbReference type="ChEBI" id="CHEBI:57692"/>
    </cofactor>
</comment>
<comment type="subunit">
    <text evidence="1">Homodimer. Heterotetramer of two MnmE and two MnmG subunits.</text>
</comment>
<comment type="subcellular location">
    <subcellularLocation>
        <location evidence="1">Cytoplasm</location>
    </subcellularLocation>
</comment>
<comment type="similarity">
    <text evidence="1">Belongs to the MnmG family.</text>
</comment>
<accession>B7H0I9</accession>
<feature type="chain" id="PRO_1000117713" description="tRNA uridine 5-carboxymethylaminomethyl modification enzyme MnmG">
    <location>
        <begin position="1"/>
        <end position="626"/>
    </location>
</feature>
<feature type="binding site" evidence="1">
    <location>
        <begin position="13"/>
        <end position="18"/>
    </location>
    <ligand>
        <name>FAD</name>
        <dbReference type="ChEBI" id="CHEBI:57692"/>
    </ligand>
</feature>
<feature type="binding site" evidence="1">
    <location>
        <begin position="273"/>
        <end position="287"/>
    </location>
    <ligand>
        <name>NAD(+)</name>
        <dbReference type="ChEBI" id="CHEBI:57540"/>
    </ligand>
</feature>
<name>MNMG_ACIB3</name>
<protein>
    <recommendedName>
        <fullName evidence="1">tRNA uridine 5-carboxymethylaminomethyl modification enzyme MnmG</fullName>
    </recommendedName>
    <alternativeName>
        <fullName evidence="1">Glucose-inhibited division protein A</fullName>
    </alternativeName>
</protein>
<dbReference type="EMBL" id="CP001172">
    <property type="protein sequence ID" value="ACJ57828.1"/>
    <property type="molecule type" value="Genomic_DNA"/>
</dbReference>
<dbReference type="RefSeq" id="WP_000559187.1">
    <property type="nucleotide sequence ID" value="NZ_CP001172.1"/>
</dbReference>
<dbReference type="SMR" id="B7H0I9"/>
<dbReference type="HOGENOM" id="CLU_007831_2_2_6"/>
<dbReference type="Proteomes" id="UP000006924">
    <property type="component" value="Chromosome"/>
</dbReference>
<dbReference type="GO" id="GO:0005829">
    <property type="term" value="C:cytosol"/>
    <property type="evidence" value="ECO:0007669"/>
    <property type="project" value="TreeGrafter"/>
</dbReference>
<dbReference type="GO" id="GO:0050660">
    <property type="term" value="F:flavin adenine dinucleotide binding"/>
    <property type="evidence" value="ECO:0007669"/>
    <property type="project" value="UniProtKB-UniRule"/>
</dbReference>
<dbReference type="GO" id="GO:0030488">
    <property type="term" value="P:tRNA methylation"/>
    <property type="evidence" value="ECO:0007669"/>
    <property type="project" value="TreeGrafter"/>
</dbReference>
<dbReference type="GO" id="GO:0002098">
    <property type="term" value="P:tRNA wobble uridine modification"/>
    <property type="evidence" value="ECO:0007669"/>
    <property type="project" value="InterPro"/>
</dbReference>
<dbReference type="FunFam" id="1.10.10.1800:FF:000001">
    <property type="entry name" value="tRNA uridine 5-carboxymethylaminomethyl modification enzyme MnmG"/>
    <property type="match status" value="1"/>
</dbReference>
<dbReference type="FunFam" id="1.10.150.570:FF:000001">
    <property type="entry name" value="tRNA uridine 5-carboxymethylaminomethyl modification enzyme MnmG"/>
    <property type="match status" value="1"/>
</dbReference>
<dbReference type="FunFam" id="3.50.50.60:FF:000002">
    <property type="entry name" value="tRNA uridine 5-carboxymethylaminomethyl modification enzyme MnmG"/>
    <property type="match status" value="1"/>
</dbReference>
<dbReference type="FunFam" id="3.50.50.60:FF:000010">
    <property type="entry name" value="tRNA uridine 5-carboxymethylaminomethyl modification enzyme MnmG"/>
    <property type="match status" value="1"/>
</dbReference>
<dbReference type="Gene3D" id="3.50.50.60">
    <property type="entry name" value="FAD/NAD(P)-binding domain"/>
    <property type="match status" value="2"/>
</dbReference>
<dbReference type="Gene3D" id="1.10.150.570">
    <property type="entry name" value="GidA associated domain, C-terminal subdomain"/>
    <property type="match status" value="1"/>
</dbReference>
<dbReference type="Gene3D" id="1.10.10.1800">
    <property type="entry name" value="tRNA uridine 5-carboxymethylaminomethyl modification enzyme MnmG/GidA"/>
    <property type="match status" value="1"/>
</dbReference>
<dbReference type="HAMAP" id="MF_00129">
    <property type="entry name" value="MnmG_GidA"/>
    <property type="match status" value="1"/>
</dbReference>
<dbReference type="InterPro" id="IPR036188">
    <property type="entry name" value="FAD/NAD-bd_sf"/>
</dbReference>
<dbReference type="InterPro" id="IPR049312">
    <property type="entry name" value="GIDA_C_N"/>
</dbReference>
<dbReference type="InterPro" id="IPR004416">
    <property type="entry name" value="MnmG"/>
</dbReference>
<dbReference type="InterPro" id="IPR002218">
    <property type="entry name" value="MnmG-rel"/>
</dbReference>
<dbReference type="InterPro" id="IPR020595">
    <property type="entry name" value="MnmG-rel_CS"/>
</dbReference>
<dbReference type="InterPro" id="IPR026904">
    <property type="entry name" value="MnmG_C"/>
</dbReference>
<dbReference type="InterPro" id="IPR047001">
    <property type="entry name" value="MnmG_C_subdom"/>
</dbReference>
<dbReference type="InterPro" id="IPR044920">
    <property type="entry name" value="MnmG_C_subdom_sf"/>
</dbReference>
<dbReference type="InterPro" id="IPR040131">
    <property type="entry name" value="MnmG_N"/>
</dbReference>
<dbReference type="NCBIfam" id="TIGR00136">
    <property type="entry name" value="mnmG_gidA"/>
    <property type="match status" value="1"/>
</dbReference>
<dbReference type="PANTHER" id="PTHR11806">
    <property type="entry name" value="GLUCOSE INHIBITED DIVISION PROTEIN A"/>
    <property type="match status" value="1"/>
</dbReference>
<dbReference type="PANTHER" id="PTHR11806:SF0">
    <property type="entry name" value="PROTEIN MTO1 HOMOLOG, MITOCHONDRIAL"/>
    <property type="match status" value="1"/>
</dbReference>
<dbReference type="Pfam" id="PF01134">
    <property type="entry name" value="GIDA"/>
    <property type="match status" value="1"/>
</dbReference>
<dbReference type="Pfam" id="PF21680">
    <property type="entry name" value="GIDA_C_1st"/>
    <property type="match status" value="1"/>
</dbReference>
<dbReference type="Pfam" id="PF13932">
    <property type="entry name" value="SAM_GIDA_C"/>
    <property type="match status" value="1"/>
</dbReference>
<dbReference type="SMART" id="SM01228">
    <property type="entry name" value="GIDA_assoc_3"/>
    <property type="match status" value="1"/>
</dbReference>
<dbReference type="SUPFAM" id="SSF51905">
    <property type="entry name" value="FAD/NAD(P)-binding domain"/>
    <property type="match status" value="1"/>
</dbReference>
<dbReference type="PROSITE" id="PS01280">
    <property type="entry name" value="GIDA_1"/>
    <property type="match status" value="1"/>
</dbReference>
<dbReference type="PROSITE" id="PS01281">
    <property type="entry name" value="GIDA_2"/>
    <property type="match status" value="1"/>
</dbReference>
<reference key="1">
    <citation type="journal article" date="2008" name="J. Bacteriol.">
        <title>Comparative genome sequence analysis of multidrug-resistant Acinetobacter baumannii.</title>
        <authorList>
            <person name="Adams M.D."/>
            <person name="Goglin K."/>
            <person name="Molyneaux N."/>
            <person name="Hujer K.M."/>
            <person name="Lavender H."/>
            <person name="Jamison J.J."/>
            <person name="MacDonald I.J."/>
            <person name="Martin K.M."/>
            <person name="Russo T."/>
            <person name="Campagnari A.A."/>
            <person name="Hujer A.M."/>
            <person name="Bonomo R.A."/>
            <person name="Gill S.R."/>
        </authorList>
    </citation>
    <scope>NUCLEOTIDE SEQUENCE [LARGE SCALE GENOMIC DNA]</scope>
    <source>
        <strain>AB307-0294</strain>
    </source>
</reference>
<keyword id="KW-0963">Cytoplasm</keyword>
<keyword id="KW-0274">FAD</keyword>
<keyword id="KW-0285">Flavoprotein</keyword>
<keyword id="KW-0520">NAD</keyword>
<keyword id="KW-0819">tRNA processing</keyword>
<organism>
    <name type="scientific">Acinetobacter baumannii (strain AB307-0294)</name>
    <dbReference type="NCBI Taxonomy" id="557600"/>
    <lineage>
        <taxon>Bacteria</taxon>
        <taxon>Pseudomonadati</taxon>
        <taxon>Pseudomonadota</taxon>
        <taxon>Gammaproteobacteria</taxon>
        <taxon>Moraxellales</taxon>
        <taxon>Moraxellaceae</taxon>
        <taxon>Acinetobacter</taxon>
        <taxon>Acinetobacter calcoaceticus/baumannii complex</taxon>
    </lineage>
</organism>
<evidence type="ECO:0000255" key="1">
    <source>
        <dbReference type="HAMAP-Rule" id="MF_00129"/>
    </source>
</evidence>
<sequence length="626" mass="69058">MHYPKVYDVIVIGGGHAGTEAALAAARMGRQTLLLTHNIETLGQMSCNPAIGGIGKSHLVREIDALGGAMALAADKGGIQFRILNSRKGAAVRATRAQADRVRYKAAIRETLENQANLDIFQQAADDLIVEGDTVKGVVTQMGIRFDAKTVVLTTGTFLGGVIHVGLEKSSGGRAGDPPSIALAQRLRELKLPVGRLKTGTPPRIDARSVDFSVMTPQPGDFPSPVMSFMGDVSMHPEQVNCYITHTNEKTHDIIRGGLDRSPMYTGVIEGVGPRYCPSIEDKIHRFSDKDSHQVFLEPEGLDTHELYPNGISTSLPFDVQFELVRSIRGMENAHILRPGYAIEYDYFNPQALKFTLETKAINGLYFAGQINGTTGYEEAGAQGLLAGLNAARRAWEQEEWTPKRDQAYMGVLVDDLITLGTKEPYRMFTSRAEYRLMLREDNADQRLTTIGRELGLVDDVRWAAYCEKMEAVERETSRLQHVWAAPNNPMGKKFVEMTGADLSKECSAIDLLKRPNINFGQIAELTGSEVSQQVGEQIEIAVKYEGYINRQHEDVAQLKRLEETKIPADFDYDVVSGLSREITQKLKTVRPETLAQASRIPGVTPAAVQLVMITIRKNNMTKKTA</sequence>
<gene>
    <name evidence="1" type="primary">mnmG</name>
    <name evidence="1" type="synonym">gidA</name>
    <name type="ordered locus">ABBFA_001282</name>
</gene>